<protein>
    <recommendedName>
        <fullName>GDP-fucose protein O-fucosyltransferase 4</fullName>
        <ecNumber evidence="2">2.4.1.221</ecNumber>
    </recommendedName>
    <alternativeName>
        <fullName>Fucosyltransferase XI</fullName>
        <shortName>Fuc-TXI</shortName>
        <shortName>FucT-XI</shortName>
    </alternativeName>
    <alternativeName>
        <fullName>Galactoside 3-L-fucosyltransferase 11</fullName>
        <shortName>Fucosyltransferase 11</shortName>
    </alternativeName>
</protein>
<evidence type="ECO:0000250" key="1">
    <source>
        <dbReference type="UniProtKB" id="Q11130"/>
    </source>
</evidence>
<evidence type="ECO:0000250" key="2">
    <source>
        <dbReference type="UniProtKB" id="Q495W5"/>
    </source>
</evidence>
<evidence type="ECO:0000255" key="3"/>
<evidence type="ECO:0000256" key="4">
    <source>
        <dbReference type="SAM" id="MobiDB-lite"/>
    </source>
</evidence>
<evidence type="ECO:0000305" key="5"/>
<name>OFUT4_ORYLA</name>
<dbReference type="EC" id="2.4.1.221" evidence="2"/>
<dbReference type="EMBL" id="AJ879587">
    <property type="protein sequence ID" value="CAI52077.1"/>
    <property type="molecule type" value="mRNA"/>
</dbReference>
<dbReference type="RefSeq" id="NP_001098247.1">
    <property type="nucleotide sequence ID" value="NM_001104777.1"/>
</dbReference>
<dbReference type="SMR" id="Q5F2N2"/>
<dbReference type="FunCoup" id="Q5F2N2">
    <property type="interactions" value="164"/>
</dbReference>
<dbReference type="STRING" id="8090.ENSORLP00000039427"/>
<dbReference type="CAZy" id="GT10">
    <property type="family name" value="Glycosyltransferase Family 10"/>
</dbReference>
<dbReference type="GlyCosmos" id="Q5F2N2">
    <property type="glycosylation" value="2 sites, No reported glycans"/>
</dbReference>
<dbReference type="Ensembl" id="ENSORLT00000042718.1">
    <property type="protein sequence ID" value="ENSORLP00000039427.1"/>
    <property type="gene ID" value="ENSORLG00000006402.2"/>
</dbReference>
<dbReference type="GeneID" id="100049386"/>
<dbReference type="KEGG" id="ola:100049386"/>
<dbReference type="CTD" id="170384"/>
<dbReference type="eggNOG" id="KOG2619">
    <property type="taxonomic scope" value="Eukaryota"/>
</dbReference>
<dbReference type="GeneTree" id="ENSGT00940000158983"/>
<dbReference type="InParanoid" id="Q5F2N2"/>
<dbReference type="OrthoDB" id="9993460at2759"/>
<dbReference type="UniPathway" id="UPA00378"/>
<dbReference type="Proteomes" id="UP000001038">
    <property type="component" value="Chromosome 10"/>
</dbReference>
<dbReference type="Proteomes" id="UP000265180">
    <property type="component" value="Unplaced"/>
</dbReference>
<dbReference type="Proteomes" id="UP000265200">
    <property type="component" value="Unplaced"/>
</dbReference>
<dbReference type="Bgee" id="ENSORLG00000006402">
    <property type="expression patterns" value="Expressed in gastrula and 13 other cell types or tissues"/>
</dbReference>
<dbReference type="GO" id="GO:0005783">
    <property type="term" value="C:endoplasmic reticulum"/>
    <property type="evidence" value="ECO:0000250"/>
    <property type="project" value="UniProtKB"/>
</dbReference>
<dbReference type="GO" id="GO:0005789">
    <property type="term" value="C:endoplasmic reticulum membrane"/>
    <property type="evidence" value="ECO:0007669"/>
    <property type="project" value="UniProtKB-SubCell"/>
</dbReference>
<dbReference type="GO" id="GO:0000139">
    <property type="term" value="C:Golgi membrane"/>
    <property type="evidence" value="ECO:0007669"/>
    <property type="project" value="InterPro"/>
</dbReference>
<dbReference type="GO" id="GO:0046920">
    <property type="term" value="F:alpha-(1-&gt;3)-fucosyltransferase activity"/>
    <property type="evidence" value="ECO:0000318"/>
    <property type="project" value="GO_Central"/>
</dbReference>
<dbReference type="GO" id="GO:0046922">
    <property type="term" value="F:peptide-O-fucosyltransferase activity"/>
    <property type="evidence" value="ECO:0000250"/>
    <property type="project" value="UniProtKB"/>
</dbReference>
<dbReference type="GO" id="GO:0036065">
    <property type="term" value="P:fucosylation"/>
    <property type="evidence" value="ECO:0000318"/>
    <property type="project" value="GO_Central"/>
</dbReference>
<dbReference type="GO" id="GO:0050714">
    <property type="term" value="P:positive regulation of protein secretion"/>
    <property type="evidence" value="ECO:0000250"/>
    <property type="project" value="UniProtKB"/>
</dbReference>
<dbReference type="FunFam" id="3.40.50.11660:FF:000002">
    <property type="entry name" value="Alpha-(1,3)-fucosyltransferase"/>
    <property type="match status" value="1"/>
</dbReference>
<dbReference type="Gene3D" id="3.40.50.11660">
    <property type="entry name" value="Glycosyl transferase family 10, C-terminal domain"/>
    <property type="match status" value="1"/>
</dbReference>
<dbReference type="InterPro" id="IPR017176">
    <property type="entry name" value="Alpha-1_3-FUT_met"/>
</dbReference>
<dbReference type="InterPro" id="IPR055270">
    <property type="entry name" value="Glyco_tran_10_C"/>
</dbReference>
<dbReference type="InterPro" id="IPR031481">
    <property type="entry name" value="Glyco_tran_10_N"/>
</dbReference>
<dbReference type="InterPro" id="IPR001503">
    <property type="entry name" value="Glyco_trans_10"/>
</dbReference>
<dbReference type="InterPro" id="IPR038577">
    <property type="entry name" value="GT10-like_C_sf"/>
</dbReference>
<dbReference type="PANTHER" id="PTHR11929">
    <property type="entry name" value="ALPHA- 1,3 -FUCOSYLTRANSFERASE"/>
    <property type="match status" value="1"/>
</dbReference>
<dbReference type="PANTHER" id="PTHR11929:SF198">
    <property type="entry name" value="ALPHA-(1,3)-FUCOSYLTRANSFERASE 11"/>
    <property type="match status" value="1"/>
</dbReference>
<dbReference type="Pfam" id="PF17039">
    <property type="entry name" value="Glyco_tran_10_N"/>
    <property type="match status" value="1"/>
</dbReference>
<dbReference type="Pfam" id="PF00852">
    <property type="entry name" value="Glyco_transf_10"/>
    <property type="match status" value="1"/>
</dbReference>
<dbReference type="PIRSF" id="PIRSF037332">
    <property type="entry name" value="Alpha1_3FUT_met"/>
    <property type="match status" value="1"/>
</dbReference>
<dbReference type="SUPFAM" id="SSF53756">
    <property type="entry name" value="UDP-Glycosyltransferase/glycogen phosphorylase"/>
    <property type="match status" value="1"/>
</dbReference>
<reference key="1">
    <citation type="submission" date="2005-02" db="EMBL/GenBank/DDBJ databases">
        <title>Phylogeny of fucosyltransferases.</title>
        <authorList>
            <person name="Martinez-Duncker I."/>
            <person name="Oriol R."/>
            <person name="Mollicone R."/>
        </authorList>
    </citation>
    <scope>NUCLEOTIDE SEQUENCE [MRNA]</scope>
</reference>
<feature type="chain" id="PRO_0000299015" description="GDP-fucose protein O-fucosyltransferase 4">
    <location>
        <begin position="1"/>
        <end position="497"/>
    </location>
</feature>
<feature type="topological domain" description="Cytoplasmic" evidence="3">
    <location>
        <begin position="1"/>
        <end position="6"/>
    </location>
</feature>
<feature type="transmembrane region" description="Helical; Signal-anchor for type II membrane protein" evidence="3">
    <location>
        <begin position="7"/>
        <end position="27"/>
    </location>
</feature>
<feature type="topological domain" description="Lumenal" evidence="3">
    <location>
        <begin position="28"/>
        <end position="497"/>
    </location>
</feature>
<feature type="region of interest" description="Disordered" evidence="4">
    <location>
        <begin position="406"/>
        <end position="427"/>
    </location>
</feature>
<feature type="glycosylation site" description="N-linked (GlcNAc...) asparagine" evidence="3">
    <location>
        <position position="169"/>
    </location>
</feature>
<feature type="glycosylation site" description="N-linked (GlcNAc...) asparagine" evidence="3">
    <location>
        <position position="474"/>
    </location>
</feature>
<feature type="disulfide bond" evidence="1">
    <location>
        <begin position="392"/>
        <end position="395"/>
    </location>
</feature>
<gene>
    <name type="primary">fut11</name>
    <name evidence="2" type="synonym">pofut4</name>
</gene>
<sequence length="497" mass="57187">MACRRRLLPCAGLGLFGVLCWVWVSFASFPDDQLPLEVFDTVDRGAFLPQSAFREMEFASIASYKGPGNTDGRSNKQLPILLWWSAGLFPHFPGDTERIDCALSSCLVTSNRKVQLYKRTASIIFYGTDFRAYEAPLPRLPHQTWALFHEESPMNNYFLSHAPGIRLFNYTATFRRESDYPLTLQWLPSLDYLLRPVAVSLEEKNRLRREGMAPVLYMQSHCDVPSDRDRYVQELMKYIQVDSYGKCLKNKPLPEHLEDTATATGEEPGFMNFVARYKFHLAFENGLCPDYMTEKLWRPLHQGCVPVYRGSPAVADWMPNGHAAIIIDNFPSPKALADFLRHLDENDDEYTRYLEFKNLKSITNTRLLEALETREWGVNDMSKPNYLNGFECYVCDQENARLAAERAHRKDPERNPPPLPKMASNSHMGCPLPSPGYGQVQDLPADDGWLQIWPQDYWQSLDQAEGLESLIRHNESDPSLLWRHIQSITERRARGKH</sequence>
<proteinExistence type="evidence at transcript level"/>
<keyword id="KW-1015">Disulfide bond</keyword>
<keyword id="KW-0256">Endoplasmic reticulum</keyword>
<keyword id="KW-0325">Glycoprotein</keyword>
<keyword id="KW-0328">Glycosyltransferase</keyword>
<keyword id="KW-0472">Membrane</keyword>
<keyword id="KW-1185">Reference proteome</keyword>
<keyword id="KW-0735">Signal-anchor</keyword>
<keyword id="KW-0808">Transferase</keyword>
<keyword id="KW-0812">Transmembrane</keyword>
<keyword id="KW-1133">Transmembrane helix</keyword>
<accession>Q5F2N2</accession>
<organism>
    <name type="scientific">Oryzias latipes</name>
    <name type="common">Japanese rice fish</name>
    <name type="synonym">Japanese killifish</name>
    <dbReference type="NCBI Taxonomy" id="8090"/>
    <lineage>
        <taxon>Eukaryota</taxon>
        <taxon>Metazoa</taxon>
        <taxon>Chordata</taxon>
        <taxon>Craniata</taxon>
        <taxon>Vertebrata</taxon>
        <taxon>Euteleostomi</taxon>
        <taxon>Actinopterygii</taxon>
        <taxon>Neopterygii</taxon>
        <taxon>Teleostei</taxon>
        <taxon>Neoteleostei</taxon>
        <taxon>Acanthomorphata</taxon>
        <taxon>Ovalentaria</taxon>
        <taxon>Atherinomorphae</taxon>
        <taxon>Beloniformes</taxon>
        <taxon>Adrianichthyidae</taxon>
        <taxon>Oryziinae</taxon>
        <taxon>Oryzias</taxon>
    </lineage>
</organism>
<comment type="function">
    <text evidence="2">Protein O-fucosyltransferase that specifically catalyzes O-fucosylation of serine or threonine residues in EMI domains of target proteins. Attaches fucose through an O-glycosidic linkage. O-fucosylation of EMI domain-containing proteins may be required for facilitating protein folding and secretion.</text>
</comment>
<comment type="catalytic activity">
    <reaction evidence="2">
        <text>L-threonyl-[protein] + GDP-beta-L-fucose = 3-O-(alpha-L-fucosyl)-L-threonyl-[protein] + GDP + H(+)</text>
        <dbReference type="Rhea" id="RHEA:70491"/>
        <dbReference type="Rhea" id="RHEA-COMP:11060"/>
        <dbReference type="Rhea" id="RHEA-COMP:17915"/>
        <dbReference type="ChEBI" id="CHEBI:15378"/>
        <dbReference type="ChEBI" id="CHEBI:30013"/>
        <dbReference type="ChEBI" id="CHEBI:57273"/>
        <dbReference type="ChEBI" id="CHEBI:58189"/>
        <dbReference type="ChEBI" id="CHEBI:189631"/>
        <dbReference type="EC" id="2.4.1.221"/>
    </reaction>
    <physiologicalReaction direction="left-to-right" evidence="2">
        <dbReference type="Rhea" id="RHEA:70492"/>
    </physiologicalReaction>
</comment>
<comment type="catalytic activity">
    <reaction evidence="2">
        <text>L-seryl-[protein] + GDP-beta-L-fucose = 3-O-(alpha-L-fucosyl)-L-seryl-[protein] + GDP + H(+)</text>
        <dbReference type="Rhea" id="RHEA:63644"/>
        <dbReference type="Rhea" id="RHEA-COMP:9863"/>
        <dbReference type="Rhea" id="RHEA-COMP:17914"/>
        <dbReference type="ChEBI" id="CHEBI:15378"/>
        <dbReference type="ChEBI" id="CHEBI:29999"/>
        <dbReference type="ChEBI" id="CHEBI:57273"/>
        <dbReference type="ChEBI" id="CHEBI:58189"/>
        <dbReference type="ChEBI" id="CHEBI:189632"/>
        <dbReference type="EC" id="2.4.1.221"/>
    </reaction>
    <physiologicalReaction direction="left-to-right" evidence="2">
        <dbReference type="Rhea" id="RHEA:63645"/>
    </physiologicalReaction>
</comment>
<comment type="pathway">
    <text evidence="2">Protein modification; protein glycosylation.</text>
</comment>
<comment type="subcellular location">
    <subcellularLocation>
        <location evidence="2">Endoplasmic reticulum membrane</location>
        <topology evidence="3">Single-pass type II membrane protein</topology>
    </subcellularLocation>
</comment>
<comment type="similarity">
    <text evidence="5">Belongs to the glycosyltransferase 10 family.</text>
</comment>